<dbReference type="EC" id="7.1.2.2" evidence="1"/>
<dbReference type="EMBL" id="CP000512">
    <property type="protein sequence ID" value="ABM30979.1"/>
    <property type="molecule type" value="Genomic_DNA"/>
</dbReference>
<dbReference type="RefSeq" id="WP_011793556.1">
    <property type="nucleotide sequence ID" value="NC_008752.1"/>
</dbReference>
<dbReference type="SMR" id="A1TJ41"/>
<dbReference type="STRING" id="397945.Aave_0372"/>
<dbReference type="GeneID" id="34239581"/>
<dbReference type="KEGG" id="aav:Aave_0372"/>
<dbReference type="eggNOG" id="COG0055">
    <property type="taxonomic scope" value="Bacteria"/>
</dbReference>
<dbReference type="HOGENOM" id="CLU_022398_0_2_4"/>
<dbReference type="OrthoDB" id="9801639at2"/>
<dbReference type="Proteomes" id="UP000002596">
    <property type="component" value="Chromosome"/>
</dbReference>
<dbReference type="GO" id="GO:0005886">
    <property type="term" value="C:plasma membrane"/>
    <property type="evidence" value="ECO:0007669"/>
    <property type="project" value="UniProtKB-SubCell"/>
</dbReference>
<dbReference type="GO" id="GO:0045259">
    <property type="term" value="C:proton-transporting ATP synthase complex"/>
    <property type="evidence" value="ECO:0007669"/>
    <property type="project" value="UniProtKB-KW"/>
</dbReference>
<dbReference type="GO" id="GO:0005524">
    <property type="term" value="F:ATP binding"/>
    <property type="evidence" value="ECO:0007669"/>
    <property type="project" value="UniProtKB-UniRule"/>
</dbReference>
<dbReference type="GO" id="GO:0016887">
    <property type="term" value="F:ATP hydrolysis activity"/>
    <property type="evidence" value="ECO:0007669"/>
    <property type="project" value="InterPro"/>
</dbReference>
<dbReference type="GO" id="GO:0046933">
    <property type="term" value="F:proton-transporting ATP synthase activity, rotational mechanism"/>
    <property type="evidence" value="ECO:0007669"/>
    <property type="project" value="UniProtKB-UniRule"/>
</dbReference>
<dbReference type="CDD" id="cd18110">
    <property type="entry name" value="ATP-synt_F1_beta_C"/>
    <property type="match status" value="1"/>
</dbReference>
<dbReference type="CDD" id="cd18115">
    <property type="entry name" value="ATP-synt_F1_beta_N"/>
    <property type="match status" value="1"/>
</dbReference>
<dbReference type="CDD" id="cd01133">
    <property type="entry name" value="F1-ATPase_beta_CD"/>
    <property type="match status" value="1"/>
</dbReference>
<dbReference type="FunFam" id="1.10.1140.10:FF:000001">
    <property type="entry name" value="ATP synthase subunit beta"/>
    <property type="match status" value="1"/>
</dbReference>
<dbReference type="FunFam" id="3.40.50.300:FF:000004">
    <property type="entry name" value="ATP synthase subunit beta"/>
    <property type="match status" value="1"/>
</dbReference>
<dbReference type="Gene3D" id="2.40.10.170">
    <property type="match status" value="1"/>
</dbReference>
<dbReference type="Gene3D" id="1.10.1140.10">
    <property type="entry name" value="Bovine Mitochondrial F1-atpase, Atp Synthase Beta Chain, Chain D, domain 3"/>
    <property type="match status" value="1"/>
</dbReference>
<dbReference type="Gene3D" id="3.40.50.300">
    <property type="entry name" value="P-loop containing nucleotide triphosphate hydrolases"/>
    <property type="match status" value="1"/>
</dbReference>
<dbReference type="HAMAP" id="MF_01347">
    <property type="entry name" value="ATP_synth_beta_bact"/>
    <property type="match status" value="1"/>
</dbReference>
<dbReference type="InterPro" id="IPR003593">
    <property type="entry name" value="AAA+_ATPase"/>
</dbReference>
<dbReference type="InterPro" id="IPR055190">
    <property type="entry name" value="ATP-synt_VA_C"/>
</dbReference>
<dbReference type="InterPro" id="IPR005722">
    <property type="entry name" value="ATP_synth_F1_bsu"/>
</dbReference>
<dbReference type="InterPro" id="IPR020003">
    <property type="entry name" value="ATPase_a/bsu_AS"/>
</dbReference>
<dbReference type="InterPro" id="IPR050053">
    <property type="entry name" value="ATPase_alpha/beta_chains"/>
</dbReference>
<dbReference type="InterPro" id="IPR004100">
    <property type="entry name" value="ATPase_F1/V1/A1_a/bsu_N"/>
</dbReference>
<dbReference type="InterPro" id="IPR036121">
    <property type="entry name" value="ATPase_F1/V1/A1_a/bsu_N_sf"/>
</dbReference>
<dbReference type="InterPro" id="IPR000194">
    <property type="entry name" value="ATPase_F1/V1/A1_a/bsu_nucl-bd"/>
</dbReference>
<dbReference type="InterPro" id="IPR024034">
    <property type="entry name" value="ATPase_F1/V1_b/a_C"/>
</dbReference>
<dbReference type="InterPro" id="IPR027417">
    <property type="entry name" value="P-loop_NTPase"/>
</dbReference>
<dbReference type="NCBIfam" id="TIGR01039">
    <property type="entry name" value="atpD"/>
    <property type="match status" value="1"/>
</dbReference>
<dbReference type="PANTHER" id="PTHR15184">
    <property type="entry name" value="ATP SYNTHASE"/>
    <property type="match status" value="1"/>
</dbReference>
<dbReference type="PANTHER" id="PTHR15184:SF71">
    <property type="entry name" value="ATP SYNTHASE SUBUNIT BETA, MITOCHONDRIAL"/>
    <property type="match status" value="1"/>
</dbReference>
<dbReference type="Pfam" id="PF00006">
    <property type="entry name" value="ATP-synt_ab"/>
    <property type="match status" value="1"/>
</dbReference>
<dbReference type="Pfam" id="PF02874">
    <property type="entry name" value="ATP-synt_ab_N"/>
    <property type="match status" value="1"/>
</dbReference>
<dbReference type="Pfam" id="PF22919">
    <property type="entry name" value="ATP-synt_VA_C"/>
    <property type="match status" value="1"/>
</dbReference>
<dbReference type="SMART" id="SM00382">
    <property type="entry name" value="AAA"/>
    <property type="match status" value="1"/>
</dbReference>
<dbReference type="SUPFAM" id="SSF47917">
    <property type="entry name" value="C-terminal domain of alpha and beta subunits of F1 ATP synthase"/>
    <property type="match status" value="1"/>
</dbReference>
<dbReference type="SUPFAM" id="SSF50615">
    <property type="entry name" value="N-terminal domain of alpha and beta subunits of F1 ATP synthase"/>
    <property type="match status" value="1"/>
</dbReference>
<dbReference type="SUPFAM" id="SSF52540">
    <property type="entry name" value="P-loop containing nucleoside triphosphate hydrolases"/>
    <property type="match status" value="1"/>
</dbReference>
<dbReference type="PROSITE" id="PS00152">
    <property type="entry name" value="ATPASE_ALPHA_BETA"/>
    <property type="match status" value="1"/>
</dbReference>
<gene>
    <name evidence="1" type="primary">atpD</name>
    <name type="ordered locus">Aave_0372</name>
</gene>
<proteinExistence type="inferred from homology"/>
<organism>
    <name type="scientific">Paracidovorax citrulli (strain AAC00-1)</name>
    <name type="common">Acidovorax citrulli</name>
    <dbReference type="NCBI Taxonomy" id="397945"/>
    <lineage>
        <taxon>Bacteria</taxon>
        <taxon>Pseudomonadati</taxon>
        <taxon>Pseudomonadota</taxon>
        <taxon>Betaproteobacteria</taxon>
        <taxon>Burkholderiales</taxon>
        <taxon>Comamonadaceae</taxon>
        <taxon>Paracidovorax</taxon>
    </lineage>
</organism>
<feature type="chain" id="PRO_0000339470" description="ATP synthase subunit beta">
    <location>
        <begin position="1"/>
        <end position="476"/>
    </location>
</feature>
<feature type="binding site" evidence="1">
    <location>
        <begin position="158"/>
        <end position="165"/>
    </location>
    <ligand>
        <name>ATP</name>
        <dbReference type="ChEBI" id="CHEBI:30616"/>
    </ligand>
</feature>
<accession>A1TJ41</accession>
<keyword id="KW-0066">ATP synthesis</keyword>
<keyword id="KW-0067">ATP-binding</keyword>
<keyword id="KW-0997">Cell inner membrane</keyword>
<keyword id="KW-1003">Cell membrane</keyword>
<keyword id="KW-0139">CF(1)</keyword>
<keyword id="KW-0375">Hydrogen ion transport</keyword>
<keyword id="KW-0406">Ion transport</keyword>
<keyword id="KW-0472">Membrane</keyword>
<keyword id="KW-0547">Nucleotide-binding</keyword>
<keyword id="KW-1278">Translocase</keyword>
<keyword id="KW-0813">Transport</keyword>
<protein>
    <recommendedName>
        <fullName evidence="1">ATP synthase subunit beta</fullName>
        <ecNumber evidence="1">7.1.2.2</ecNumber>
    </recommendedName>
    <alternativeName>
        <fullName evidence="1">ATP synthase F1 sector subunit beta</fullName>
    </alternativeName>
    <alternativeName>
        <fullName evidence="1">F-ATPase subunit beta</fullName>
    </alternativeName>
</protein>
<comment type="function">
    <text evidence="1">Produces ATP from ADP in the presence of a proton gradient across the membrane. The catalytic sites are hosted primarily by the beta subunits.</text>
</comment>
<comment type="catalytic activity">
    <reaction evidence="1">
        <text>ATP + H2O + 4 H(+)(in) = ADP + phosphate + 5 H(+)(out)</text>
        <dbReference type="Rhea" id="RHEA:57720"/>
        <dbReference type="ChEBI" id="CHEBI:15377"/>
        <dbReference type="ChEBI" id="CHEBI:15378"/>
        <dbReference type="ChEBI" id="CHEBI:30616"/>
        <dbReference type="ChEBI" id="CHEBI:43474"/>
        <dbReference type="ChEBI" id="CHEBI:456216"/>
        <dbReference type="EC" id="7.1.2.2"/>
    </reaction>
</comment>
<comment type="subunit">
    <text evidence="1">F-type ATPases have 2 components, CF(1) - the catalytic core - and CF(0) - the membrane proton channel. CF(1) has five subunits: alpha(3), beta(3), gamma(1), delta(1), epsilon(1). CF(0) has three main subunits: a(1), b(2) and c(9-12). The alpha and beta chains form an alternating ring which encloses part of the gamma chain. CF(1) is attached to CF(0) by a central stalk formed by the gamma and epsilon chains, while a peripheral stalk is formed by the delta and b chains.</text>
</comment>
<comment type="subcellular location">
    <subcellularLocation>
        <location evidence="1">Cell inner membrane</location>
        <topology evidence="1">Peripheral membrane protein</topology>
    </subcellularLocation>
</comment>
<comment type="similarity">
    <text evidence="1">Belongs to the ATPase alpha/beta chains family.</text>
</comment>
<reference key="1">
    <citation type="submission" date="2006-12" db="EMBL/GenBank/DDBJ databases">
        <title>Complete sequence of Acidovorax avenae subsp. citrulli AAC00-1.</title>
        <authorList>
            <person name="Copeland A."/>
            <person name="Lucas S."/>
            <person name="Lapidus A."/>
            <person name="Barry K."/>
            <person name="Detter J.C."/>
            <person name="Glavina del Rio T."/>
            <person name="Dalin E."/>
            <person name="Tice H."/>
            <person name="Pitluck S."/>
            <person name="Kiss H."/>
            <person name="Brettin T."/>
            <person name="Bruce D."/>
            <person name="Han C."/>
            <person name="Tapia R."/>
            <person name="Gilna P."/>
            <person name="Schmutz J."/>
            <person name="Larimer F."/>
            <person name="Land M."/>
            <person name="Hauser L."/>
            <person name="Kyrpides N."/>
            <person name="Kim E."/>
            <person name="Stahl D."/>
            <person name="Richardson P."/>
        </authorList>
    </citation>
    <scope>NUCLEOTIDE SEQUENCE [LARGE SCALE GENOMIC DNA]</scope>
    <source>
        <strain>AAC00-1</strain>
    </source>
</reference>
<evidence type="ECO:0000255" key="1">
    <source>
        <dbReference type="HAMAP-Rule" id="MF_01347"/>
    </source>
</evidence>
<sequence length="476" mass="51378">MAQENTQVNAGVQGKIVQCIGAVVDVEFPRDQMPKVYDALKLEGSPLTLEVQQQLGDGVVRTIALGSSDGLRRGLMVSNTGNPITVPVGKATLGRIMDVLGSPIDERGPVSQELTASIHRKAPAYDELSPSQELLETGIKVIDLVCPFAKGGKVGLFGGAGVGKTVNMMELINNIAKAHSGLSVFAGVGERTREGNDFYHEMADSGVVNLEKLEDSKVAMVYGQMNEPPGNRLRVALTGLTIAESFRDEGRDVLFFVDNIYRYTLAGTEVSALLGRMPSAVGYQPTLAEEMGRLQERITSTKVGSITSIQAVYVPADDLTDPSPATTFAHLDSTVVLSRDIASLGIYPAVDPLDSTSRQLDPQVVGEEHYQVARGVQGTLQRYKELRDIIAILGMDELAPEDKLAVARARKIQRFLSQPFHVAEVFTGSPGKYVPLAETIRGFKMIVAGECDHLPEQAFYMVGTIDEAFEKAKKVA</sequence>
<name>ATPB_PARC0</name>